<name>AMP1_PINMO</name>
<organism>
    <name type="scientific">Pinus monticola</name>
    <name type="common">Western white pine</name>
    <name type="synonym">Strobus monticola</name>
    <dbReference type="NCBI Taxonomy" id="3345"/>
    <lineage>
        <taxon>Eukaryota</taxon>
        <taxon>Viridiplantae</taxon>
        <taxon>Streptophyta</taxon>
        <taxon>Embryophyta</taxon>
        <taxon>Tracheophyta</taxon>
        <taxon>Spermatophyta</taxon>
        <taxon>Pinopsida</taxon>
        <taxon>Pinidae</taxon>
        <taxon>Conifers I</taxon>
        <taxon>Pinales</taxon>
        <taxon>Pinaceae</taxon>
        <taxon>Pinus</taxon>
        <taxon>Pinus subgen. Strobus</taxon>
    </lineage>
</organism>
<reference evidence="7 8" key="1">
    <citation type="journal article" date="2006" name="Phytopathology">
        <title>Cloning and characterization of a putative antifungal peptide gene (Pm-AMP1) in Pinus monticola.</title>
        <authorList>
            <person name="Ekramoddoullah A.K.M."/>
            <person name="Liu J.-J."/>
            <person name="Zamani A."/>
        </authorList>
    </citation>
    <scope>NUCLEOTIDE SEQUENCE [MRNA]</scope>
    <scope>TISSUE SPECIFICITY</scope>
    <scope>DEVELOPMENTAL STAGE</scope>
    <scope>INDUCTION</scope>
    <source>
        <tissue evidence="4">Needle</tissue>
    </source>
</reference>
<reference evidence="7" key="2">
    <citation type="journal article" date="1997" name="Tree Physiol.">
        <title>Analysis of bark proteins in blister rust-resistant and susceptible western white pine (Pinus monticola).</title>
        <authorList>
            <person name="Davidson J."/>
            <person name="Ekramoddoullah A.K.M."/>
        </authorList>
    </citation>
    <scope>PROTEIN SEQUENCE OF 27-49</scope>
    <source>
        <tissue evidence="3">Bark</tissue>
    </source>
</reference>
<comment type="function">
    <text evidence="1">Antimicrobial peptide.</text>
</comment>
<comment type="subcellular location">
    <subcellularLocation>
        <location evidence="1 2">Secreted</location>
    </subcellularLocation>
    <subcellularLocation>
        <location evidence="1 2">Secreted</location>
        <location evidence="1 2">Cell wall</location>
    </subcellularLocation>
</comment>
<comment type="tissue specificity">
    <text evidence="4">Detected at higher levels in needles and twigs from canker-resistant seedlings than in needles from canker-susceptible plants. During summer, detected on cankered, healthy and marginal bark. During winter, detected at lower levels in cankered bark and bark from the canker margin than in healthy bark (at protein level).</text>
</comment>
<comment type="developmental stage">
    <text evidence="4">In summer, present at higher levels in older needles and twigs than in tissues from the current year. In winter, detected at high levels in both older and current-year needles and twigs.</text>
</comment>
<comment type="induction">
    <text evidence="4">By wounding and by methyl jasmonate.</text>
</comment>
<dbReference type="EMBL" id="AY596276">
    <property type="protein sequence ID" value="AAU00106.1"/>
    <property type="molecule type" value="mRNA"/>
</dbReference>
<dbReference type="SMR" id="P83880"/>
<dbReference type="GO" id="GO:0005576">
    <property type="term" value="C:extracellular region"/>
    <property type="evidence" value="ECO:0007669"/>
    <property type="project" value="UniProtKB-SubCell"/>
</dbReference>
<dbReference type="GO" id="GO:0006952">
    <property type="term" value="P:defense response"/>
    <property type="evidence" value="ECO:0007669"/>
    <property type="project" value="UniProtKB-KW"/>
</dbReference>
<dbReference type="GO" id="GO:0045926">
    <property type="term" value="P:negative regulation of growth"/>
    <property type="evidence" value="ECO:0007669"/>
    <property type="project" value="InterPro"/>
</dbReference>
<dbReference type="Gene3D" id="2.60.20.30">
    <property type="match status" value="1"/>
</dbReference>
<dbReference type="InterPro" id="IPR015791">
    <property type="entry name" value="Antimic/Inh_G_crystallin-like"/>
</dbReference>
<dbReference type="InterPro" id="IPR015201">
    <property type="entry name" value="Antimicrobial_MiAMP1"/>
</dbReference>
<dbReference type="InterPro" id="IPR011024">
    <property type="entry name" value="G_crystallin-like"/>
</dbReference>
<dbReference type="Pfam" id="PF09117">
    <property type="entry name" value="MiAMP1"/>
    <property type="match status" value="1"/>
</dbReference>
<dbReference type="SUPFAM" id="SSF49695">
    <property type="entry name" value="gamma-Crystallin-like"/>
    <property type="match status" value="1"/>
</dbReference>
<proteinExistence type="evidence at protein level"/>
<accession>P83880</accession>
<accession>Q2M5E6</accession>
<keyword id="KW-0929">Antimicrobial</keyword>
<keyword id="KW-0134">Cell wall</keyword>
<keyword id="KW-0903">Direct protein sequencing</keyword>
<keyword id="KW-1015">Disulfide bond</keyword>
<keyword id="KW-0611">Plant defense</keyword>
<keyword id="KW-0964">Secreted</keyword>
<keyword id="KW-0732">Signal</keyword>
<sequence>METKRLAYVMFVLVCLFLAMAQPSQASYFSAWAGPGCNNHNARYSKCGCSNIGHNVHGGYEFVYQGQTAAAYNTDNCKGVAQTRFSSSVNQACSNFGWKSVFIQC</sequence>
<protein>
    <recommendedName>
        <fullName evidence="5 6">Antimicrobial peptide 1</fullName>
    </recommendedName>
    <alternativeName>
        <fullName evidence="5">10.6 kDa protein</fullName>
    </alternativeName>
    <alternativeName>
        <fullName evidence="5 6">PMAP1</fullName>
    </alternativeName>
</protein>
<evidence type="ECO:0000250" key="1">
    <source>
        <dbReference type="UniProtKB" id="P80915"/>
    </source>
</evidence>
<evidence type="ECO:0000250" key="2">
    <source>
        <dbReference type="UniProtKB" id="P85484"/>
    </source>
</evidence>
<evidence type="ECO:0000269" key="3">
    <source>
    </source>
</evidence>
<evidence type="ECO:0000269" key="4">
    <source>
    </source>
</evidence>
<evidence type="ECO:0000303" key="5">
    <source>
    </source>
</evidence>
<evidence type="ECO:0000303" key="6">
    <source>
    </source>
</evidence>
<evidence type="ECO:0000305" key="7"/>
<evidence type="ECO:0000312" key="8">
    <source>
        <dbReference type="EMBL" id="AAU00106.1"/>
    </source>
</evidence>
<feature type="signal peptide" evidence="3">
    <location>
        <begin position="1"/>
        <end position="26"/>
    </location>
</feature>
<feature type="chain" id="PRO_0000064591" description="Antimicrobial peptide 1" evidence="3">
    <location>
        <begin position="27"/>
        <end position="105"/>
    </location>
</feature>
<feature type="disulfide bond" evidence="1">
    <location>
        <begin position="37"/>
        <end position="93"/>
    </location>
</feature>
<feature type="disulfide bond" evidence="1">
    <location>
        <begin position="47"/>
        <end position="105"/>
    </location>
</feature>
<feature type="disulfide bond" evidence="1">
    <location>
        <begin position="49"/>
        <end position="77"/>
    </location>
</feature>
<feature type="sequence conflict" description="In Ref. 2; AA sequence." evidence="7" ref="2">
    <original>W</original>
    <variation>Y</variation>
    <location>
        <position position="32"/>
    </location>
</feature>
<feature type="sequence conflict" description="In Ref. 2; AA sequence." evidence="7" ref="2">
    <original>CGC</original>
    <variation>KGV</variation>
    <location>
        <begin position="47"/>
        <end position="49"/>
    </location>
</feature>